<name>MNMA_ACIB3</name>
<organism>
    <name type="scientific">Acinetobacter baumannii (strain AB307-0294)</name>
    <dbReference type="NCBI Taxonomy" id="557600"/>
    <lineage>
        <taxon>Bacteria</taxon>
        <taxon>Pseudomonadati</taxon>
        <taxon>Pseudomonadota</taxon>
        <taxon>Gammaproteobacteria</taxon>
        <taxon>Moraxellales</taxon>
        <taxon>Moraxellaceae</taxon>
        <taxon>Acinetobacter</taxon>
        <taxon>Acinetobacter calcoaceticus/baumannii complex</taxon>
    </lineage>
</organism>
<protein>
    <recommendedName>
        <fullName evidence="1">tRNA-specific 2-thiouridylase MnmA</fullName>
        <ecNumber evidence="1">2.8.1.13</ecNumber>
    </recommendedName>
</protein>
<reference key="1">
    <citation type="journal article" date="2008" name="J. Bacteriol.">
        <title>Comparative genome sequence analysis of multidrug-resistant Acinetobacter baumannii.</title>
        <authorList>
            <person name="Adams M.D."/>
            <person name="Goglin K."/>
            <person name="Molyneaux N."/>
            <person name="Hujer K.M."/>
            <person name="Lavender H."/>
            <person name="Jamison J.J."/>
            <person name="MacDonald I.J."/>
            <person name="Martin K.M."/>
            <person name="Russo T."/>
            <person name="Campagnari A.A."/>
            <person name="Hujer A.M."/>
            <person name="Bonomo R.A."/>
            <person name="Gill S.R."/>
        </authorList>
    </citation>
    <scope>NUCLEOTIDE SEQUENCE [LARGE SCALE GENOMIC DNA]</scope>
    <source>
        <strain>AB307-0294</strain>
    </source>
</reference>
<proteinExistence type="inferred from homology"/>
<keyword id="KW-0067">ATP-binding</keyword>
<keyword id="KW-0963">Cytoplasm</keyword>
<keyword id="KW-1015">Disulfide bond</keyword>
<keyword id="KW-0547">Nucleotide-binding</keyword>
<keyword id="KW-0694">RNA-binding</keyword>
<keyword id="KW-0808">Transferase</keyword>
<keyword id="KW-0819">tRNA processing</keyword>
<keyword id="KW-0820">tRNA-binding</keyword>
<dbReference type="EC" id="2.8.1.13" evidence="1"/>
<dbReference type="EMBL" id="CP001172">
    <property type="protein sequence ID" value="ACJ57335.1"/>
    <property type="molecule type" value="Genomic_DNA"/>
</dbReference>
<dbReference type="RefSeq" id="WP_001187604.1">
    <property type="nucleotide sequence ID" value="NZ_CP001172.1"/>
</dbReference>
<dbReference type="SMR" id="B7GZ21"/>
<dbReference type="GeneID" id="92894744"/>
<dbReference type="HOGENOM" id="CLU_035188_1_0_6"/>
<dbReference type="Proteomes" id="UP000006924">
    <property type="component" value="Chromosome"/>
</dbReference>
<dbReference type="GO" id="GO:0005737">
    <property type="term" value="C:cytoplasm"/>
    <property type="evidence" value="ECO:0007669"/>
    <property type="project" value="UniProtKB-SubCell"/>
</dbReference>
<dbReference type="GO" id="GO:0005524">
    <property type="term" value="F:ATP binding"/>
    <property type="evidence" value="ECO:0007669"/>
    <property type="project" value="UniProtKB-KW"/>
</dbReference>
<dbReference type="GO" id="GO:0000049">
    <property type="term" value="F:tRNA binding"/>
    <property type="evidence" value="ECO:0007669"/>
    <property type="project" value="UniProtKB-KW"/>
</dbReference>
<dbReference type="GO" id="GO:0103016">
    <property type="term" value="F:tRNA-uridine 2-sulfurtransferase activity"/>
    <property type="evidence" value="ECO:0007669"/>
    <property type="project" value="UniProtKB-EC"/>
</dbReference>
<dbReference type="GO" id="GO:0002143">
    <property type="term" value="P:tRNA wobble position uridine thiolation"/>
    <property type="evidence" value="ECO:0007669"/>
    <property type="project" value="TreeGrafter"/>
</dbReference>
<dbReference type="CDD" id="cd01998">
    <property type="entry name" value="MnmA_TRMU-like"/>
    <property type="match status" value="1"/>
</dbReference>
<dbReference type="FunFam" id="2.30.30.280:FF:000001">
    <property type="entry name" value="tRNA-specific 2-thiouridylase MnmA"/>
    <property type="match status" value="1"/>
</dbReference>
<dbReference type="FunFam" id="2.40.30.10:FF:000023">
    <property type="entry name" value="tRNA-specific 2-thiouridylase MnmA"/>
    <property type="match status" value="1"/>
</dbReference>
<dbReference type="FunFam" id="3.40.50.620:FF:000004">
    <property type="entry name" value="tRNA-specific 2-thiouridylase MnmA"/>
    <property type="match status" value="1"/>
</dbReference>
<dbReference type="Gene3D" id="2.30.30.280">
    <property type="entry name" value="Adenine nucleotide alpha hydrolases-like domains"/>
    <property type="match status" value="1"/>
</dbReference>
<dbReference type="Gene3D" id="3.40.50.620">
    <property type="entry name" value="HUPs"/>
    <property type="match status" value="1"/>
</dbReference>
<dbReference type="Gene3D" id="2.40.30.10">
    <property type="entry name" value="Translation factors"/>
    <property type="match status" value="1"/>
</dbReference>
<dbReference type="HAMAP" id="MF_00144">
    <property type="entry name" value="tRNA_thiouridyl_MnmA"/>
    <property type="match status" value="1"/>
</dbReference>
<dbReference type="InterPro" id="IPR004506">
    <property type="entry name" value="MnmA-like"/>
</dbReference>
<dbReference type="InterPro" id="IPR046885">
    <property type="entry name" value="MnmA-like_C"/>
</dbReference>
<dbReference type="InterPro" id="IPR046884">
    <property type="entry name" value="MnmA-like_central"/>
</dbReference>
<dbReference type="InterPro" id="IPR023382">
    <property type="entry name" value="MnmA-like_central_sf"/>
</dbReference>
<dbReference type="InterPro" id="IPR014729">
    <property type="entry name" value="Rossmann-like_a/b/a_fold"/>
</dbReference>
<dbReference type="NCBIfam" id="NF001138">
    <property type="entry name" value="PRK00143.1"/>
    <property type="match status" value="1"/>
</dbReference>
<dbReference type="NCBIfam" id="TIGR00420">
    <property type="entry name" value="trmU"/>
    <property type="match status" value="1"/>
</dbReference>
<dbReference type="PANTHER" id="PTHR11933:SF5">
    <property type="entry name" value="MITOCHONDRIAL TRNA-SPECIFIC 2-THIOURIDYLASE 1"/>
    <property type="match status" value="1"/>
</dbReference>
<dbReference type="PANTHER" id="PTHR11933">
    <property type="entry name" value="TRNA 5-METHYLAMINOMETHYL-2-THIOURIDYLATE -METHYLTRANSFERASE"/>
    <property type="match status" value="1"/>
</dbReference>
<dbReference type="Pfam" id="PF03054">
    <property type="entry name" value="tRNA_Me_trans"/>
    <property type="match status" value="1"/>
</dbReference>
<dbReference type="Pfam" id="PF20258">
    <property type="entry name" value="tRNA_Me_trans_C"/>
    <property type="match status" value="1"/>
</dbReference>
<dbReference type="Pfam" id="PF20259">
    <property type="entry name" value="tRNA_Me_trans_M"/>
    <property type="match status" value="1"/>
</dbReference>
<dbReference type="SUPFAM" id="SSF52402">
    <property type="entry name" value="Adenine nucleotide alpha hydrolases-like"/>
    <property type="match status" value="1"/>
</dbReference>
<accession>B7GZ21</accession>
<comment type="function">
    <text evidence="1">Catalyzes the 2-thiolation of uridine at the wobble position (U34) of tRNA, leading to the formation of s(2)U34.</text>
</comment>
<comment type="catalytic activity">
    <reaction evidence="1">
        <text>S-sulfanyl-L-cysteinyl-[protein] + uridine(34) in tRNA + AH2 + ATP = 2-thiouridine(34) in tRNA + L-cysteinyl-[protein] + A + AMP + diphosphate + H(+)</text>
        <dbReference type="Rhea" id="RHEA:47032"/>
        <dbReference type="Rhea" id="RHEA-COMP:10131"/>
        <dbReference type="Rhea" id="RHEA-COMP:11726"/>
        <dbReference type="Rhea" id="RHEA-COMP:11727"/>
        <dbReference type="Rhea" id="RHEA-COMP:11728"/>
        <dbReference type="ChEBI" id="CHEBI:13193"/>
        <dbReference type="ChEBI" id="CHEBI:15378"/>
        <dbReference type="ChEBI" id="CHEBI:17499"/>
        <dbReference type="ChEBI" id="CHEBI:29950"/>
        <dbReference type="ChEBI" id="CHEBI:30616"/>
        <dbReference type="ChEBI" id="CHEBI:33019"/>
        <dbReference type="ChEBI" id="CHEBI:61963"/>
        <dbReference type="ChEBI" id="CHEBI:65315"/>
        <dbReference type="ChEBI" id="CHEBI:87170"/>
        <dbReference type="ChEBI" id="CHEBI:456215"/>
        <dbReference type="EC" id="2.8.1.13"/>
    </reaction>
</comment>
<comment type="subcellular location">
    <subcellularLocation>
        <location evidence="1">Cytoplasm</location>
    </subcellularLocation>
</comment>
<comment type="similarity">
    <text evidence="1">Belongs to the MnmA/TRMU family.</text>
</comment>
<evidence type="ECO:0000255" key="1">
    <source>
        <dbReference type="HAMAP-Rule" id="MF_00144"/>
    </source>
</evidence>
<feature type="chain" id="PRO_1000198598" description="tRNA-specific 2-thiouridylase MnmA">
    <location>
        <begin position="1"/>
        <end position="377"/>
    </location>
</feature>
<feature type="region of interest" description="Interaction with target base in tRNA" evidence="1">
    <location>
        <begin position="94"/>
        <end position="96"/>
    </location>
</feature>
<feature type="region of interest" description="Interaction with tRNA" evidence="1">
    <location>
        <begin position="151"/>
        <end position="153"/>
    </location>
</feature>
<feature type="region of interest" description="Interaction with tRNA" evidence="1">
    <location>
        <begin position="315"/>
        <end position="316"/>
    </location>
</feature>
<feature type="active site" description="Nucleophile" evidence="1">
    <location>
        <position position="99"/>
    </location>
</feature>
<feature type="active site" description="Cysteine persulfide intermediate" evidence="1">
    <location>
        <position position="201"/>
    </location>
</feature>
<feature type="binding site" evidence="1">
    <location>
        <begin position="8"/>
        <end position="15"/>
    </location>
    <ligand>
        <name>ATP</name>
        <dbReference type="ChEBI" id="CHEBI:30616"/>
    </ligand>
</feature>
<feature type="binding site" evidence="1">
    <location>
        <position position="34"/>
    </location>
    <ligand>
        <name>ATP</name>
        <dbReference type="ChEBI" id="CHEBI:30616"/>
    </ligand>
</feature>
<feature type="binding site" evidence="1">
    <location>
        <position position="123"/>
    </location>
    <ligand>
        <name>ATP</name>
        <dbReference type="ChEBI" id="CHEBI:30616"/>
    </ligand>
</feature>
<feature type="site" description="Interaction with tRNA" evidence="1">
    <location>
        <position position="124"/>
    </location>
</feature>
<feature type="site" description="Interaction with tRNA" evidence="1">
    <location>
        <position position="350"/>
    </location>
</feature>
<feature type="disulfide bond" description="Alternate" evidence="1">
    <location>
        <begin position="99"/>
        <end position="201"/>
    </location>
</feature>
<gene>
    <name evidence="1" type="primary">mnmA</name>
    <name type="ordered locus">ABBFA_001018</name>
</gene>
<sequence length="377" mass="41882">MQQRVIVGMSGGVDSSVSAALLLQQGYQVEGLFMKNWEEDDGTEYCTAMEDLADAQAVADKIGIKLHTANFAMEYWDRVFEHFLAEYAAGRTPNPDILCNKEIKFRAFLDHAMTLGADFIATGHYARRAETAYNSKGEAYAPLLRGLDNNKDQTYFLHAVHGREINKTLFPVGEIEKPEVRRIAEELDLATAKKKDSTGICFIGERRFNDFLKQYLPAQPGKIVLDNGKEVGEHHGLMYYTLGQRGGIGLGGMKGASEGAWFVLHKDVANNRLVVGQGHDHPLMQSTQLWSEAIDWVAGEQNIPAEGLRCTAKTRYRQPDQACTVFIDENSEHGVRVEFDEPQRAVTPGQSVVFYSDEVCLGGGVIHHTNAPTPNFI</sequence>